<protein>
    <recommendedName>
        <fullName>EMBRYO SURROUNDING FACTOR 1-like protein 9</fullName>
    </recommendedName>
</protein>
<reference key="1">
    <citation type="journal article" date="1999" name="Nature">
        <title>Sequence and analysis of chromosome 2 of the plant Arabidopsis thaliana.</title>
        <authorList>
            <person name="Lin X."/>
            <person name="Kaul S."/>
            <person name="Rounsley S.D."/>
            <person name="Shea T.P."/>
            <person name="Benito M.-I."/>
            <person name="Town C.D."/>
            <person name="Fujii C.Y."/>
            <person name="Mason T.M."/>
            <person name="Bowman C.L."/>
            <person name="Barnstead M.E."/>
            <person name="Feldblyum T.V."/>
            <person name="Buell C.R."/>
            <person name="Ketchum K.A."/>
            <person name="Lee J.J."/>
            <person name="Ronning C.M."/>
            <person name="Koo H.L."/>
            <person name="Moffat K.S."/>
            <person name="Cronin L.A."/>
            <person name="Shen M."/>
            <person name="Pai G."/>
            <person name="Van Aken S."/>
            <person name="Umayam L."/>
            <person name="Tallon L.J."/>
            <person name="Gill J.E."/>
            <person name="Adams M.D."/>
            <person name="Carrera A.J."/>
            <person name="Creasy T.H."/>
            <person name="Goodman H.M."/>
            <person name="Somerville C.R."/>
            <person name="Copenhaver G.P."/>
            <person name="Preuss D."/>
            <person name="Nierman W.C."/>
            <person name="White O."/>
            <person name="Eisen J.A."/>
            <person name="Salzberg S.L."/>
            <person name="Fraser C.M."/>
            <person name="Venter J.C."/>
        </authorList>
    </citation>
    <scope>NUCLEOTIDE SEQUENCE [LARGE SCALE GENOMIC DNA]</scope>
    <source>
        <strain>cv. Columbia</strain>
    </source>
</reference>
<reference key="2">
    <citation type="journal article" date="2017" name="Plant J.">
        <title>Araport11: a complete reannotation of the Arabidopsis thaliana reference genome.</title>
        <authorList>
            <person name="Cheng C.Y."/>
            <person name="Krishnakumar V."/>
            <person name="Chan A.P."/>
            <person name="Thibaud-Nissen F."/>
            <person name="Schobel S."/>
            <person name="Town C.D."/>
        </authorList>
    </citation>
    <scope>GENOME REANNOTATION</scope>
    <source>
        <strain>cv. Columbia</strain>
    </source>
</reference>
<reference key="3">
    <citation type="journal article" date="2014" name="Science">
        <title>Central cell-derived peptides regulate early embryo patterning in flowering plants.</title>
        <authorList>
            <person name="Costa L.M."/>
            <person name="Marshall E."/>
            <person name="Tesfaye M."/>
            <person name="Silverstein K.A."/>
            <person name="Mori M."/>
            <person name="Umetsu Y."/>
            <person name="Otterbach S.L."/>
            <person name="Papareddy R."/>
            <person name="Dickinson H.G."/>
            <person name="Boutiller K."/>
            <person name="VandenBosch K.A."/>
            <person name="Ohki S."/>
            <person name="Gutierrez-Marcos J.F."/>
        </authorList>
    </citation>
    <scope>IDENTIFICATION</scope>
    <scope>TISSUE SPECIFICITY</scope>
</reference>
<gene>
    <name type="primary">ESFL9</name>
    <name type="ordered locus">At2g16505</name>
    <name type="ORF">F1P15</name>
</gene>
<evidence type="ECO:0000250" key="1"/>
<evidence type="ECO:0000255" key="2"/>
<evidence type="ECO:0000269" key="3">
    <source>
    </source>
</evidence>
<evidence type="ECO:0000305" key="4"/>
<keyword id="KW-1015">Disulfide bond</keyword>
<keyword id="KW-1185">Reference proteome</keyword>
<keyword id="KW-0732">Signal</keyword>
<sequence>MSSSRFLILCIILISFFPLHECENGKSVESNKAMKPVCMPVNCNNKDKKLTCACCIGANPRNRCYNSRSQCTADCKL</sequence>
<accession>A8MQY8</accession>
<proteinExistence type="evidence at transcript level"/>
<comment type="tissue specificity">
    <text evidence="3">Expressed in flowers.</text>
</comment>
<comment type="similarity">
    <text evidence="4">Belongs to the MEG family.</text>
</comment>
<dbReference type="EMBL" id="AC007195">
    <property type="status" value="NOT_ANNOTATED_CDS"/>
    <property type="molecule type" value="Genomic_DNA"/>
</dbReference>
<dbReference type="EMBL" id="CP002685">
    <property type="protein sequence ID" value="AEC06504.1"/>
    <property type="molecule type" value="Genomic_DNA"/>
</dbReference>
<dbReference type="RefSeq" id="NP_001077897.1">
    <property type="nucleotide sequence ID" value="NM_001084428.2"/>
</dbReference>
<dbReference type="STRING" id="3702.A8MQY8"/>
<dbReference type="PaxDb" id="3702-AT2G16505.1"/>
<dbReference type="ProteomicsDB" id="222294"/>
<dbReference type="EnsemblPlants" id="AT2G16505.1">
    <property type="protein sequence ID" value="AT2G16505.1"/>
    <property type="gene ID" value="AT2G16505"/>
</dbReference>
<dbReference type="GeneID" id="5007879"/>
<dbReference type="Gramene" id="AT2G16505.1">
    <property type="protein sequence ID" value="AT2G16505.1"/>
    <property type="gene ID" value="AT2G16505"/>
</dbReference>
<dbReference type="KEGG" id="ath:AT2G16505"/>
<dbReference type="Araport" id="AT2G16505"/>
<dbReference type="TAIR" id="AT2G16505">
    <property type="gene designation" value="PCP-BDELTA"/>
</dbReference>
<dbReference type="HOGENOM" id="CLU_183999_0_0_1"/>
<dbReference type="InParanoid" id="A8MQY8"/>
<dbReference type="OMA" id="QFAIFCA"/>
<dbReference type="OrthoDB" id="1085500at2759"/>
<dbReference type="PhylomeDB" id="A8MQY8"/>
<dbReference type="PRO" id="PR:A8MQY8"/>
<dbReference type="Proteomes" id="UP000006548">
    <property type="component" value="Chromosome 2"/>
</dbReference>
<dbReference type="ExpressionAtlas" id="A8MQY8">
    <property type="expression patterns" value="baseline"/>
</dbReference>
<feature type="signal peptide" evidence="2">
    <location>
        <begin position="1"/>
        <end position="22"/>
    </location>
</feature>
<feature type="chain" id="PRO_0000430070" description="EMBRYO SURROUNDING FACTOR 1-like protein 9">
    <location>
        <begin position="23"/>
        <end position="77"/>
    </location>
</feature>
<feature type="disulfide bond" evidence="1">
    <location>
        <begin position="38"/>
        <end position="54"/>
    </location>
</feature>
<feature type="disulfide bond" evidence="1">
    <location>
        <begin position="43"/>
        <end position="75"/>
    </location>
</feature>
<feature type="disulfide bond" evidence="1">
    <location>
        <begin position="52"/>
        <end position="71"/>
    </location>
</feature>
<feature type="disulfide bond" evidence="1">
    <location>
        <begin position="55"/>
        <end position="64"/>
    </location>
</feature>
<name>ESFL9_ARATH</name>
<organism>
    <name type="scientific">Arabidopsis thaliana</name>
    <name type="common">Mouse-ear cress</name>
    <dbReference type="NCBI Taxonomy" id="3702"/>
    <lineage>
        <taxon>Eukaryota</taxon>
        <taxon>Viridiplantae</taxon>
        <taxon>Streptophyta</taxon>
        <taxon>Embryophyta</taxon>
        <taxon>Tracheophyta</taxon>
        <taxon>Spermatophyta</taxon>
        <taxon>Magnoliopsida</taxon>
        <taxon>eudicotyledons</taxon>
        <taxon>Gunneridae</taxon>
        <taxon>Pentapetalae</taxon>
        <taxon>rosids</taxon>
        <taxon>malvids</taxon>
        <taxon>Brassicales</taxon>
        <taxon>Brassicaceae</taxon>
        <taxon>Camelineae</taxon>
        <taxon>Arabidopsis</taxon>
    </lineage>
</organism>